<gene>
    <name evidence="1" type="primary">purC</name>
    <name type="ordered locus">PP_1240</name>
</gene>
<feature type="chain" id="PRO_0000100856" description="Phosphoribosylaminoimidazole-succinocarboxamide synthase">
    <location>
        <begin position="1"/>
        <end position="236"/>
    </location>
</feature>
<proteinExistence type="inferred from homology"/>
<sequence length="236" mass="26916">MEKREELYRGKAKSVYKTDDADRLILLFRNDTSAFDGKRIEQLDRKGMVNNKFNAFIMQKLEEAGVPTQFDKLLGDNECLVKKLDMIPVECVVRNYAAGSLVKRLGVEEGIKLEPSTFELFLKNDEKGDPFINESHVVAFGWGTAEQLVEMKKLSLKVNEVLSKLFDDAGLLLVDFKLEFGVFHGQIVLGDEFSPDGCRLWDKETRKKMDKDRFRQGLGDVIEAYEEVAKRLGVPL</sequence>
<protein>
    <recommendedName>
        <fullName evidence="1">Phosphoribosylaminoimidazole-succinocarboxamide synthase</fullName>
        <ecNumber evidence="1">6.3.2.6</ecNumber>
    </recommendedName>
    <alternativeName>
        <fullName evidence="1">SAICAR synthetase</fullName>
    </alternativeName>
</protein>
<accession>Q88NG9</accession>
<reference key="1">
    <citation type="journal article" date="2002" name="Environ. Microbiol.">
        <title>Complete genome sequence and comparative analysis of the metabolically versatile Pseudomonas putida KT2440.</title>
        <authorList>
            <person name="Nelson K.E."/>
            <person name="Weinel C."/>
            <person name="Paulsen I.T."/>
            <person name="Dodson R.J."/>
            <person name="Hilbert H."/>
            <person name="Martins dos Santos V.A.P."/>
            <person name="Fouts D.E."/>
            <person name="Gill S.R."/>
            <person name="Pop M."/>
            <person name="Holmes M."/>
            <person name="Brinkac L.M."/>
            <person name="Beanan M.J."/>
            <person name="DeBoy R.T."/>
            <person name="Daugherty S.C."/>
            <person name="Kolonay J.F."/>
            <person name="Madupu R."/>
            <person name="Nelson W.C."/>
            <person name="White O."/>
            <person name="Peterson J.D."/>
            <person name="Khouri H.M."/>
            <person name="Hance I."/>
            <person name="Chris Lee P."/>
            <person name="Holtzapple E.K."/>
            <person name="Scanlan D."/>
            <person name="Tran K."/>
            <person name="Moazzez A."/>
            <person name="Utterback T.R."/>
            <person name="Rizzo M."/>
            <person name="Lee K."/>
            <person name="Kosack D."/>
            <person name="Moestl D."/>
            <person name="Wedler H."/>
            <person name="Lauber J."/>
            <person name="Stjepandic D."/>
            <person name="Hoheisel J."/>
            <person name="Straetz M."/>
            <person name="Heim S."/>
            <person name="Kiewitz C."/>
            <person name="Eisen J.A."/>
            <person name="Timmis K.N."/>
            <person name="Duesterhoeft A."/>
            <person name="Tuemmler B."/>
            <person name="Fraser C.M."/>
        </authorList>
    </citation>
    <scope>NUCLEOTIDE SEQUENCE [LARGE SCALE GENOMIC DNA]</scope>
    <source>
        <strain>ATCC 47054 / DSM 6125 / CFBP 8728 / NCIMB 11950 / KT2440</strain>
    </source>
</reference>
<name>PUR7_PSEPK</name>
<comment type="catalytic activity">
    <reaction evidence="1">
        <text>5-amino-1-(5-phospho-D-ribosyl)imidazole-4-carboxylate + L-aspartate + ATP = (2S)-2-[5-amino-1-(5-phospho-beta-D-ribosyl)imidazole-4-carboxamido]succinate + ADP + phosphate + 2 H(+)</text>
        <dbReference type="Rhea" id="RHEA:22628"/>
        <dbReference type="ChEBI" id="CHEBI:15378"/>
        <dbReference type="ChEBI" id="CHEBI:29991"/>
        <dbReference type="ChEBI" id="CHEBI:30616"/>
        <dbReference type="ChEBI" id="CHEBI:43474"/>
        <dbReference type="ChEBI" id="CHEBI:58443"/>
        <dbReference type="ChEBI" id="CHEBI:77657"/>
        <dbReference type="ChEBI" id="CHEBI:456216"/>
        <dbReference type="EC" id="6.3.2.6"/>
    </reaction>
</comment>
<comment type="pathway">
    <text evidence="1">Purine metabolism; IMP biosynthesis via de novo pathway; 5-amino-1-(5-phospho-D-ribosyl)imidazole-4-carboxamide from 5-amino-1-(5-phospho-D-ribosyl)imidazole-4-carboxylate: step 1/2.</text>
</comment>
<comment type="similarity">
    <text evidence="1">Belongs to the SAICAR synthetase family.</text>
</comment>
<evidence type="ECO:0000255" key="1">
    <source>
        <dbReference type="HAMAP-Rule" id="MF_00137"/>
    </source>
</evidence>
<dbReference type="EC" id="6.3.2.6" evidence="1"/>
<dbReference type="EMBL" id="AE015451">
    <property type="protein sequence ID" value="AAN66864.1"/>
    <property type="molecule type" value="Genomic_DNA"/>
</dbReference>
<dbReference type="RefSeq" id="NP_743400.1">
    <property type="nucleotide sequence ID" value="NC_002947.4"/>
</dbReference>
<dbReference type="RefSeq" id="WP_003254733.1">
    <property type="nucleotide sequence ID" value="NZ_CP169744.1"/>
</dbReference>
<dbReference type="SMR" id="Q88NG9"/>
<dbReference type="STRING" id="160488.PP_1240"/>
<dbReference type="PaxDb" id="160488-PP_1240"/>
<dbReference type="GeneID" id="83678607"/>
<dbReference type="KEGG" id="ppu:PP_1240"/>
<dbReference type="PATRIC" id="fig|160488.4.peg.1316"/>
<dbReference type="eggNOG" id="COG0152">
    <property type="taxonomic scope" value="Bacteria"/>
</dbReference>
<dbReference type="HOGENOM" id="CLU_061495_2_0_6"/>
<dbReference type="OrthoDB" id="9801549at2"/>
<dbReference type="PhylomeDB" id="Q88NG9"/>
<dbReference type="BioCyc" id="PPUT160488:G1G01-1326-MONOMER"/>
<dbReference type="UniPathway" id="UPA00074">
    <property type="reaction ID" value="UER00131"/>
</dbReference>
<dbReference type="Proteomes" id="UP000000556">
    <property type="component" value="Chromosome"/>
</dbReference>
<dbReference type="GO" id="GO:0005829">
    <property type="term" value="C:cytosol"/>
    <property type="evidence" value="ECO:0007669"/>
    <property type="project" value="TreeGrafter"/>
</dbReference>
<dbReference type="GO" id="GO:0005524">
    <property type="term" value="F:ATP binding"/>
    <property type="evidence" value="ECO:0007669"/>
    <property type="project" value="UniProtKB-KW"/>
</dbReference>
<dbReference type="GO" id="GO:0004639">
    <property type="term" value="F:phosphoribosylaminoimidazolesuccinocarboxamide synthase activity"/>
    <property type="evidence" value="ECO:0007669"/>
    <property type="project" value="UniProtKB-UniRule"/>
</dbReference>
<dbReference type="GO" id="GO:0006189">
    <property type="term" value="P:'de novo' IMP biosynthetic process"/>
    <property type="evidence" value="ECO:0007669"/>
    <property type="project" value="UniProtKB-UniRule"/>
</dbReference>
<dbReference type="GO" id="GO:0009236">
    <property type="term" value="P:cobalamin biosynthetic process"/>
    <property type="evidence" value="ECO:0007669"/>
    <property type="project" value="InterPro"/>
</dbReference>
<dbReference type="CDD" id="cd01415">
    <property type="entry name" value="SAICAR_synt_PurC"/>
    <property type="match status" value="1"/>
</dbReference>
<dbReference type="FunFam" id="3.30.200.20:FF:000086">
    <property type="entry name" value="Phosphoribosylaminoimidazole-succinocarboxamide synthase"/>
    <property type="match status" value="1"/>
</dbReference>
<dbReference type="FunFam" id="3.30.470.20:FF:000006">
    <property type="entry name" value="Phosphoribosylaminoimidazole-succinocarboxamide synthase"/>
    <property type="match status" value="1"/>
</dbReference>
<dbReference type="Gene3D" id="3.30.470.20">
    <property type="entry name" value="ATP-grasp fold, B domain"/>
    <property type="match status" value="1"/>
</dbReference>
<dbReference type="Gene3D" id="3.30.200.20">
    <property type="entry name" value="Phosphorylase Kinase, domain 1"/>
    <property type="match status" value="1"/>
</dbReference>
<dbReference type="HAMAP" id="MF_00137">
    <property type="entry name" value="SAICAR_synth"/>
    <property type="match status" value="1"/>
</dbReference>
<dbReference type="InterPro" id="IPR028923">
    <property type="entry name" value="SAICAR_synt/ADE2_N"/>
</dbReference>
<dbReference type="InterPro" id="IPR033934">
    <property type="entry name" value="SAICAR_synt_PurC"/>
</dbReference>
<dbReference type="InterPro" id="IPR001636">
    <property type="entry name" value="SAICAR_synth"/>
</dbReference>
<dbReference type="InterPro" id="IPR050089">
    <property type="entry name" value="SAICAR_synthetase"/>
</dbReference>
<dbReference type="InterPro" id="IPR018236">
    <property type="entry name" value="SAICAR_synthetase_CS"/>
</dbReference>
<dbReference type="NCBIfam" id="TIGR00081">
    <property type="entry name" value="purC"/>
    <property type="match status" value="1"/>
</dbReference>
<dbReference type="PANTHER" id="PTHR43599">
    <property type="entry name" value="MULTIFUNCTIONAL PROTEIN ADE2"/>
    <property type="match status" value="1"/>
</dbReference>
<dbReference type="PANTHER" id="PTHR43599:SF3">
    <property type="entry name" value="SI:DKEY-6E2.2"/>
    <property type="match status" value="1"/>
</dbReference>
<dbReference type="Pfam" id="PF01259">
    <property type="entry name" value="SAICAR_synt"/>
    <property type="match status" value="1"/>
</dbReference>
<dbReference type="SUPFAM" id="SSF56104">
    <property type="entry name" value="SAICAR synthase-like"/>
    <property type="match status" value="1"/>
</dbReference>
<dbReference type="PROSITE" id="PS01057">
    <property type="entry name" value="SAICAR_SYNTHETASE_1"/>
    <property type="match status" value="1"/>
</dbReference>
<dbReference type="PROSITE" id="PS01058">
    <property type="entry name" value="SAICAR_SYNTHETASE_2"/>
    <property type="match status" value="1"/>
</dbReference>
<organism>
    <name type="scientific">Pseudomonas putida (strain ATCC 47054 / DSM 6125 / CFBP 8728 / NCIMB 11950 / KT2440)</name>
    <dbReference type="NCBI Taxonomy" id="160488"/>
    <lineage>
        <taxon>Bacteria</taxon>
        <taxon>Pseudomonadati</taxon>
        <taxon>Pseudomonadota</taxon>
        <taxon>Gammaproteobacteria</taxon>
        <taxon>Pseudomonadales</taxon>
        <taxon>Pseudomonadaceae</taxon>
        <taxon>Pseudomonas</taxon>
    </lineage>
</organism>
<keyword id="KW-0067">ATP-binding</keyword>
<keyword id="KW-0436">Ligase</keyword>
<keyword id="KW-0547">Nucleotide-binding</keyword>
<keyword id="KW-0658">Purine biosynthesis</keyword>
<keyword id="KW-1185">Reference proteome</keyword>